<reference key="1">
    <citation type="journal article" date="2002" name="Nature">
        <title>Genome sequence of the plant pathogen Ralstonia solanacearum.</title>
        <authorList>
            <person name="Salanoubat M."/>
            <person name="Genin S."/>
            <person name="Artiguenave F."/>
            <person name="Gouzy J."/>
            <person name="Mangenot S."/>
            <person name="Arlat M."/>
            <person name="Billault A."/>
            <person name="Brottier P."/>
            <person name="Camus J.-C."/>
            <person name="Cattolico L."/>
            <person name="Chandler M."/>
            <person name="Choisne N."/>
            <person name="Claudel-Renard C."/>
            <person name="Cunnac S."/>
            <person name="Demange N."/>
            <person name="Gaspin C."/>
            <person name="Lavie M."/>
            <person name="Moisan A."/>
            <person name="Robert C."/>
            <person name="Saurin W."/>
            <person name="Schiex T."/>
            <person name="Siguier P."/>
            <person name="Thebault P."/>
            <person name="Whalen M."/>
            <person name="Wincker P."/>
            <person name="Levy M."/>
            <person name="Weissenbach J."/>
            <person name="Boucher C.A."/>
        </authorList>
    </citation>
    <scope>NUCLEOTIDE SEQUENCE [LARGE SCALE GENOMIC DNA]</scope>
    <source>
        <strain>ATCC BAA-1114 / GMI1000</strain>
    </source>
</reference>
<feature type="chain" id="PRO_0000128736" description="Probable malate:quinone oxidoreductase">
    <location>
        <begin position="1"/>
        <end position="541"/>
    </location>
</feature>
<feature type="region of interest" description="Disordered" evidence="2">
    <location>
        <begin position="520"/>
        <end position="541"/>
    </location>
</feature>
<evidence type="ECO:0000255" key="1">
    <source>
        <dbReference type="HAMAP-Rule" id="MF_00212"/>
    </source>
</evidence>
<evidence type="ECO:0000256" key="2">
    <source>
        <dbReference type="SAM" id="MobiDB-lite"/>
    </source>
</evidence>
<sequence length="541" mass="59441">MVCLAAFSAQAAETKKVDVLLVGGGIMSSTLGVWLHELEPDWSMMMVERLDGVAQESSNGWNNAGTGHSALAELNYTPEKSNGKIDISKAVEINEGFQVTRQFWTYQVKTGVLKNPRSFINSTPHMSFVWGEDNVRYLKKRYEALQASPLFRGMQFSDDYDQISKWVPLMMEGRDRSQKVAATWMPVGTDVNFGEITRQFVGYLQSQPQFTLSLSSEVRDIKRNDDGTWRVSYVNLKSGDRQDVDTKFLFIGAGGGALRLLQASGIPEARDFAAFPVGGSFLVTENPEVVNRHLAKAYGKASVGSPPMSVPHLDTRVIDGKRIILFGPFATFSTKFLKNGSYMDLFGSTTSHNVMPMLHVGVDEFPLVQYLAGQLMLSDEDRFNALKEYFPLAKKEDWRLWQAGQRVQIIQRDEAKGGILKLGTQIVKSKDGTIAGLLGASPGASTAAPIMLGVLETVFKDKLATPAWQQKVRQMIPTYGIKLNDNPAKVYEEWVATAEALQLSPPPRIDLRVTPAAPAAKPAAGAAQQAKPAKATADIAL</sequence>
<name>MQO_RALN1</name>
<comment type="catalytic activity">
    <reaction evidence="1">
        <text>(S)-malate + a quinone = a quinol + oxaloacetate</text>
        <dbReference type="Rhea" id="RHEA:46012"/>
        <dbReference type="ChEBI" id="CHEBI:15589"/>
        <dbReference type="ChEBI" id="CHEBI:16452"/>
        <dbReference type="ChEBI" id="CHEBI:24646"/>
        <dbReference type="ChEBI" id="CHEBI:132124"/>
        <dbReference type="EC" id="1.1.5.4"/>
    </reaction>
</comment>
<comment type="cofactor">
    <cofactor evidence="1">
        <name>FAD</name>
        <dbReference type="ChEBI" id="CHEBI:57692"/>
    </cofactor>
</comment>
<comment type="pathway">
    <text evidence="1">Carbohydrate metabolism; tricarboxylic acid cycle; oxaloacetate from (S)-malate (quinone route): step 1/1.</text>
</comment>
<comment type="similarity">
    <text evidence="1">Belongs to the MQO family.</text>
</comment>
<accession>Q8XRL7</accession>
<geneLocation type="plasmid">
    <name>megaplasmid Rsp</name>
</geneLocation>
<proteinExistence type="inferred from homology"/>
<dbReference type="EC" id="1.1.5.4" evidence="1"/>
<dbReference type="EMBL" id="AL646053">
    <property type="protein sequence ID" value="CAD17965.1"/>
    <property type="molecule type" value="Genomic_DNA"/>
</dbReference>
<dbReference type="SMR" id="Q8XRL7"/>
<dbReference type="STRING" id="267608.RSp0814"/>
<dbReference type="EnsemblBacteria" id="CAD17965">
    <property type="protein sequence ID" value="CAD17965"/>
    <property type="gene ID" value="RSp0814"/>
</dbReference>
<dbReference type="KEGG" id="rso:RSp0814"/>
<dbReference type="eggNOG" id="COG0579">
    <property type="taxonomic scope" value="Bacteria"/>
</dbReference>
<dbReference type="HOGENOM" id="CLU_028151_0_0_4"/>
<dbReference type="UniPathway" id="UPA00223">
    <property type="reaction ID" value="UER01008"/>
</dbReference>
<dbReference type="Proteomes" id="UP000001436">
    <property type="component" value="Plasmid megaplasmid Rsp"/>
</dbReference>
<dbReference type="GO" id="GO:0047545">
    <property type="term" value="F:2-hydroxyglutarate dehydrogenase activity"/>
    <property type="evidence" value="ECO:0007669"/>
    <property type="project" value="TreeGrafter"/>
</dbReference>
<dbReference type="GO" id="GO:0008924">
    <property type="term" value="F:L-malate dehydrogenase (quinone) activity"/>
    <property type="evidence" value="ECO:0007669"/>
    <property type="project" value="UniProtKB-UniRule"/>
</dbReference>
<dbReference type="GO" id="GO:0006099">
    <property type="term" value="P:tricarboxylic acid cycle"/>
    <property type="evidence" value="ECO:0007669"/>
    <property type="project" value="UniProtKB-UniRule"/>
</dbReference>
<dbReference type="HAMAP" id="MF_00212">
    <property type="entry name" value="MQO"/>
    <property type="match status" value="1"/>
</dbReference>
<dbReference type="InterPro" id="IPR036188">
    <property type="entry name" value="FAD/NAD-bd_sf"/>
</dbReference>
<dbReference type="InterPro" id="IPR006231">
    <property type="entry name" value="MQO"/>
</dbReference>
<dbReference type="NCBIfam" id="TIGR01320">
    <property type="entry name" value="mal_quin_oxido"/>
    <property type="match status" value="1"/>
</dbReference>
<dbReference type="NCBIfam" id="NF003603">
    <property type="entry name" value="PRK05257.1-1"/>
    <property type="match status" value="1"/>
</dbReference>
<dbReference type="NCBIfam" id="NF003605">
    <property type="entry name" value="PRK05257.1-4"/>
    <property type="match status" value="1"/>
</dbReference>
<dbReference type="NCBIfam" id="NF003606">
    <property type="entry name" value="PRK05257.2-1"/>
    <property type="match status" value="1"/>
</dbReference>
<dbReference type="NCBIfam" id="NF003611">
    <property type="entry name" value="PRK05257.3-2"/>
    <property type="match status" value="1"/>
</dbReference>
<dbReference type="NCBIfam" id="NF009875">
    <property type="entry name" value="PRK13339.1"/>
    <property type="match status" value="1"/>
</dbReference>
<dbReference type="PANTHER" id="PTHR43104">
    <property type="entry name" value="L-2-HYDROXYGLUTARATE DEHYDROGENASE, MITOCHONDRIAL"/>
    <property type="match status" value="1"/>
</dbReference>
<dbReference type="PANTHER" id="PTHR43104:SF2">
    <property type="entry name" value="L-2-HYDROXYGLUTARATE DEHYDROGENASE, MITOCHONDRIAL"/>
    <property type="match status" value="1"/>
</dbReference>
<dbReference type="Pfam" id="PF06039">
    <property type="entry name" value="Mqo"/>
    <property type="match status" value="1"/>
</dbReference>
<dbReference type="SUPFAM" id="SSF51905">
    <property type="entry name" value="FAD/NAD(P)-binding domain"/>
    <property type="match status" value="1"/>
</dbReference>
<organism>
    <name type="scientific">Ralstonia nicotianae (strain ATCC BAA-1114 / GMI1000)</name>
    <name type="common">Ralstonia solanacearum</name>
    <dbReference type="NCBI Taxonomy" id="267608"/>
    <lineage>
        <taxon>Bacteria</taxon>
        <taxon>Pseudomonadati</taxon>
        <taxon>Pseudomonadota</taxon>
        <taxon>Betaproteobacteria</taxon>
        <taxon>Burkholderiales</taxon>
        <taxon>Burkholderiaceae</taxon>
        <taxon>Ralstonia</taxon>
        <taxon>Ralstonia solanacearum species complex</taxon>
    </lineage>
</organism>
<keyword id="KW-0274">FAD</keyword>
<keyword id="KW-0285">Flavoprotein</keyword>
<keyword id="KW-0560">Oxidoreductase</keyword>
<keyword id="KW-0614">Plasmid</keyword>
<keyword id="KW-1185">Reference proteome</keyword>
<keyword id="KW-0816">Tricarboxylic acid cycle</keyword>
<protein>
    <recommendedName>
        <fullName evidence="1">Probable malate:quinone oxidoreductase</fullName>
        <ecNumber evidence="1">1.1.5.4</ecNumber>
    </recommendedName>
    <alternativeName>
        <fullName evidence="1">MQO</fullName>
    </alternativeName>
    <alternativeName>
        <fullName evidence="1">Malate dehydrogenase [quinone]</fullName>
    </alternativeName>
</protein>
<gene>
    <name evidence="1" type="primary">mqo</name>
    <name type="ordered locus">RSp0814</name>
    <name type="ORF">RS01893</name>
</gene>